<protein>
    <recommendedName>
        <fullName>Apolipoprotein C-I</fullName>
        <shortName>Apo-CI</shortName>
        <shortName>ApoC-I</shortName>
    </recommendedName>
    <alternativeName>
        <fullName>Apolipoprotein C1</fullName>
    </alternativeName>
    <component>
        <recommendedName>
            <fullName>Truncated apolipoprotein C-I</fullName>
        </recommendedName>
    </component>
</protein>
<gene>
    <name type="primary">APOC1</name>
</gene>
<dbReference type="EMBL" id="APMT01188317">
    <property type="status" value="NOT_ANNOTATED_CDS"/>
    <property type="molecule type" value="Genomic_DNA"/>
</dbReference>
<dbReference type="RefSeq" id="XP_005086405.1">
    <property type="nucleotide sequence ID" value="XM_005086348.2"/>
</dbReference>
<dbReference type="SMR" id="A0A1U7QUM6"/>
<dbReference type="STRING" id="10036.ENSMAUP00000023284"/>
<dbReference type="Ensembl" id="ENSMAUT00000027291">
    <property type="protein sequence ID" value="ENSMAUP00000023284"/>
    <property type="gene ID" value="ENSMAUG00000020478"/>
</dbReference>
<dbReference type="GeneID" id="101825021"/>
<dbReference type="KEGG" id="maua:101825021"/>
<dbReference type="CTD" id="341"/>
<dbReference type="eggNOG" id="ENOG502SEU4">
    <property type="taxonomic scope" value="Eukaryota"/>
</dbReference>
<dbReference type="OrthoDB" id="8941712at2759"/>
<dbReference type="Proteomes" id="UP000189706">
    <property type="component" value="Unplaced"/>
</dbReference>
<dbReference type="GO" id="GO:0005783">
    <property type="term" value="C:endoplasmic reticulum"/>
    <property type="evidence" value="ECO:0007669"/>
    <property type="project" value="Ensembl"/>
</dbReference>
<dbReference type="GO" id="GO:0034364">
    <property type="term" value="C:high-density lipoprotein particle"/>
    <property type="evidence" value="ECO:0007669"/>
    <property type="project" value="Ensembl"/>
</dbReference>
<dbReference type="GO" id="GO:0034361">
    <property type="term" value="C:very-low-density lipoprotein particle"/>
    <property type="evidence" value="ECO:0007669"/>
    <property type="project" value="UniProtKB-KW"/>
</dbReference>
<dbReference type="GO" id="GO:0005504">
    <property type="term" value="F:fatty acid binding"/>
    <property type="evidence" value="ECO:0007669"/>
    <property type="project" value="Ensembl"/>
</dbReference>
<dbReference type="GO" id="GO:0004859">
    <property type="term" value="F:phospholipase inhibitor activity"/>
    <property type="evidence" value="ECO:0007669"/>
    <property type="project" value="Ensembl"/>
</dbReference>
<dbReference type="GO" id="GO:0033344">
    <property type="term" value="P:cholesterol efflux"/>
    <property type="evidence" value="ECO:0007669"/>
    <property type="project" value="Ensembl"/>
</dbReference>
<dbReference type="GO" id="GO:0008203">
    <property type="term" value="P:cholesterol metabolic process"/>
    <property type="evidence" value="ECO:0007669"/>
    <property type="project" value="Ensembl"/>
</dbReference>
<dbReference type="GO" id="GO:0034382">
    <property type="term" value="P:chylomicron remnant clearance"/>
    <property type="evidence" value="ECO:0007669"/>
    <property type="project" value="Ensembl"/>
</dbReference>
<dbReference type="GO" id="GO:0042157">
    <property type="term" value="P:lipoprotein metabolic process"/>
    <property type="evidence" value="ECO:0007669"/>
    <property type="project" value="InterPro"/>
</dbReference>
<dbReference type="GO" id="GO:0032375">
    <property type="term" value="P:negative regulation of cholesterol transport"/>
    <property type="evidence" value="ECO:0007669"/>
    <property type="project" value="Ensembl"/>
</dbReference>
<dbReference type="GO" id="GO:0045717">
    <property type="term" value="P:negative regulation of fatty acid biosynthetic process"/>
    <property type="evidence" value="ECO:0007669"/>
    <property type="project" value="Ensembl"/>
</dbReference>
<dbReference type="GO" id="GO:0010900">
    <property type="term" value="P:negative regulation of phosphatidylcholine catabolic process"/>
    <property type="evidence" value="ECO:0007669"/>
    <property type="project" value="Ensembl"/>
</dbReference>
<dbReference type="GO" id="GO:0048261">
    <property type="term" value="P:negative regulation of receptor-mediated endocytosis"/>
    <property type="evidence" value="ECO:0007669"/>
    <property type="project" value="Ensembl"/>
</dbReference>
<dbReference type="GO" id="GO:0010897">
    <property type="term" value="P:negative regulation of triglyceride catabolic process"/>
    <property type="evidence" value="ECO:0007669"/>
    <property type="project" value="Ensembl"/>
</dbReference>
<dbReference type="GO" id="GO:0010916">
    <property type="term" value="P:negative regulation of very-low-density lipoprotein particle clearance"/>
    <property type="evidence" value="ECO:0007669"/>
    <property type="project" value="Ensembl"/>
</dbReference>
<dbReference type="GO" id="GO:0033700">
    <property type="term" value="P:phospholipid efflux"/>
    <property type="evidence" value="ECO:0007669"/>
    <property type="project" value="Ensembl"/>
</dbReference>
<dbReference type="GO" id="GO:0034369">
    <property type="term" value="P:plasma lipoprotein particle remodeling"/>
    <property type="evidence" value="ECO:0007669"/>
    <property type="project" value="Ensembl"/>
</dbReference>
<dbReference type="GO" id="GO:0070328">
    <property type="term" value="P:triglyceride homeostasis"/>
    <property type="evidence" value="ECO:0007669"/>
    <property type="project" value="Ensembl"/>
</dbReference>
<dbReference type="GO" id="GO:0006641">
    <property type="term" value="P:triglyceride metabolic process"/>
    <property type="evidence" value="ECO:0007669"/>
    <property type="project" value="Ensembl"/>
</dbReference>
<dbReference type="GO" id="GO:0034447">
    <property type="term" value="P:very-low-density lipoprotein particle clearance"/>
    <property type="evidence" value="ECO:0007669"/>
    <property type="project" value="Ensembl"/>
</dbReference>
<dbReference type="Gene3D" id="4.10.260.30">
    <property type="entry name" value="Apolipoprotein C-I"/>
    <property type="match status" value="1"/>
</dbReference>
<dbReference type="InterPro" id="IPR043081">
    <property type="entry name" value="ApoC-1_sf"/>
</dbReference>
<dbReference type="InterPro" id="IPR006781">
    <property type="entry name" value="ApoC-I"/>
</dbReference>
<dbReference type="PANTHER" id="PTHR16565">
    <property type="entry name" value="APOLIPOPROTEIN C-I"/>
    <property type="match status" value="1"/>
</dbReference>
<dbReference type="PANTHER" id="PTHR16565:SF2">
    <property type="entry name" value="APOLIPOPROTEIN C-I"/>
    <property type="match status" value="1"/>
</dbReference>
<dbReference type="Pfam" id="PF04691">
    <property type="entry name" value="ApoC-I"/>
    <property type="match status" value="1"/>
</dbReference>
<reference key="1">
    <citation type="submission" date="2013-03" db="EMBL/GenBank/DDBJ databases">
        <title>The Draft Genome of Mesocricetus auratus.</title>
        <authorList>
            <person name="Di Palma F."/>
            <person name="Alfoldi J."/>
            <person name="Johnson J."/>
            <person name="Berlin A."/>
            <person name="Gnerre S."/>
            <person name="Jaffe D."/>
            <person name="MacCallum I."/>
            <person name="Young S."/>
            <person name="Walker B.J."/>
            <person name="Lindblad-Toh K."/>
        </authorList>
    </citation>
    <scope>NUCLEOTIDE SEQUENCE [LARGE SCALE GENOMIC DNA]</scope>
</reference>
<reference key="2">
    <citation type="unpublished observations" date="2021-07">
        <authorList>
            <person name="Puppione D.L."/>
        </authorList>
    </citation>
    <scope>IDENTIFICATION</scope>
</reference>
<evidence type="ECO:0000250" key="1">
    <source>
        <dbReference type="UniProtKB" id="P02654"/>
    </source>
</evidence>
<evidence type="ECO:0000250" key="2">
    <source>
        <dbReference type="UniProtKB" id="P33047"/>
    </source>
</evidence>
<evidence type="ECO:0000250" key="3">
    <source>
        <dbReference type="UniProtKB" id="P34928"/>
    </source>
</evidence>
<evidence type="ECO:0000250" key="4">
    <source>
        <dbReference type="UniProtKB" id="P86336"/>
    </source>
</evidence>
<evidence type="ECO:0000255" key="5"/>
<evidence type="ECO:0000305" key="6"/>
<accession>A0A1U7QUM6</accession>
<sequence>MRLLISLPVLIVVLAMALEGPAPAQATPDLSSAFENLPEKLKEFGNTLEDKARAAIEHIKQKEILTKTRTWFSETFGKLKEKLKTTFD</sequence>
<comment type="function">
    <text evidence="1 2 3">Inhibitor of lipoprotein binding to the low density lipoprotein (LDL) receptor, LDL receptor-related protein, and very low density lipoprotein (VLDL) receptor. Associates with high density lipoproteins (HDL) and the triacylglycerol-rich lipoproteins in the plasma and makes up about 10% of the protein of the VLDL and 2% of that of HDL. Appears to interfere directly with fatty acid uptake and is also the major plasma inhibitor of cholesteryl ester transfer protein (CETP). Modulates the interaction of APOE with beta-migrating VLDL and inhibits binding of beta-VLDL to the LDL receptor-related protein (By similarity). Binds free fatty acids and reduces their intracellular esterification (By similarity).</text>
</comment>
<comment type="subcellular location">
    <subcellularLocation>
        <location evidence="1">Secreted</location>
    </subcellularLocation>
</comment>
<comment type="similarity">
    <text evidence="6">Belongs to the apolipoprotein C1 family.</text>
</comment>
<keyword id="KW-0445">Lipid transport</keyword>
<keyword id="KW-1185">Reference proteome</keyword>
<keyword id="KW-0964">Secreted</keyword>
<keyword id="KW-0732">Signal</keyword>
<keyword id="KW-0813">Transport</keyword>
<keyword id="KW-0850">VLDL</keyword>
<name>APOC1_MESAU</name>
<organism>
    <name type="scientific">Mesocricetus auratus</name>
    <name type="common">Golden hamster</name>
    <dbReference type="NCBI Taxonomy" id="10036"/>
    <lineage>
        <taxon>Eukaryota</taxon>
        <taxon>Metazoa</taxon>
        <taxon>Chordata</taxon>
        <taxon>Craniata</taxon>
        <taxon>Vertebrata</taxon>
        <taxon>Euteleostomi</taxon>
        <taxon>Mammalia</taxon>
        <taxon>Eutheria</taxon>
        <taxon>Euarchontoglires</taxon>
        <taxon>Glires</taxon>
        <taxon>Rodentia</taxon>
        <taxon>Myomorpha</taxon>
        <taxon>Muroidea</taxon>
        <taxon>Cricetidae</taxon>
        <taxon>Cricetinae</taxon>
        <taxon>Mesocricetus</taxon>
    </lineage>
</organism>
<proteinExistence type="inferred from homology"/>
<feature type="signal peptide" evidence="5">
    <location>
        <begin position="1"/>
        <end position="26"/>
    </location>
</feature>
<feature type="chain" id="PRO_5029134073" description="Apolipoprotein C-I">
    <location>
        <begin position="27"/>
        <end position="88"/>
    </location>
</feature>
<feature type="chain" id="PRO_0000453987" description="Truncated apolipoprotein C-I" evidence="4">
    <location>
        <begin position="29"/>
        <end position="88"/>
    </location>
</feature>